<sequence>MQETFKFLRCNSQGEAVEDKYSLETLKNHFVVRDEYNNLFRVFSSRDDFWEWEAAQPFEQKCFHEVVFGFLPQRLKFDIDFPVNKSYSNDNVDENVDDNVNDDDNVYDILDMIINVIMDVFYETYSLPYNINLTREQILLTDSIGLNKKRELKYSFHIILYTHSVLNNNEAKAFTSKVLENLPKHVYPFVDPQVNKSIQNFRIIGSHKKGSMRVKMFNEELADVFETSTTTKKSDTLIATPFETTCLPCIFTNVKETASSSCDTIQQSELEEVLKFAGTLCKNHCFLRVHKNLVLFKRTSPSYCEICKRMHDKDNTLILRVTGNKVYQHCRHDNKHSLLMGSLSGTNNFVETYVDQVMTKSIEVHESILFEELPDPQKHIYDESSMREYERVPTLVVKAQMKIGKTIQLRNYLQKYYGNNSISKQQTIRFVTFRQIFSKNIQSRLPNFTLYSEVTGDLDSYERVIIQVESLFRLTSTAEPVDLLILDEVESIFNQFNSGLHKYFAPSFAIFMWMLETANYVICLDANLGNRTYNILQRFRGDVPIFFHWNQYKRAQHDMYYFTSSRETWLNNLLKDLLEDKKIVIPTNSLMEARLLQSFIQKKFPEKKIGFYSSKSTAHERESHFNNVSYYWGLVDILIYTPTISAGVSYEDKRFDVLYGFFNNMSCDVETCCQMLGRVRELKSKCYKICLQGKQNYFPETIEDIEMFTLQKRDTLFQTISNHQLSFTYSKETGRPIYYKTPYYHLWLETMRIQHLSKNHFITRFINQIADTGAKVFILTGEKLETVKQYTSIKMEIKHQDYVNIASAETIDANKALLIKQNLKEGITVDQQDLFAYEKYKLLEFYAWHGHKITPKFVEQYNSFMTKQNYTGRVQISRGKTVYESLTMLQTQELNFHQWAMQHAEHHDLQYNYSFQSHMYAIMLLTKCGFKCVQDPNILTNEQLMAKLVDEFVQYDLSAVSFEFKLKKPNKTDPQTILKFINKVLGLRYGLKIHHNKGNYYIKNTKAGSLIPFVRQQIKQSPCVVSNLLPITETSSVKEETSPIKETLTET</sequence>
<organismHost>
    <name type="scientific">Ornithodoros</name>
    <name type="common">relapsing fever ticks</name>
    <dbReference type="NCBI Taxonomy" id="6937"/>
</organismHost>
<organismHost>
    <name type="scientific">Phacochoerus aethiopicus</name>
    <name type="common">Warthog</name>
    <dbReference type="NCBI Taxonomy" id="85517"/>
</organismHost>
<organismHost>
    <name type="scientific">Phacochoerus africanus</name>
    <name type="common">Warthog</name>
    <dbReference type="NCBI Taxonomy" id="41426"/>
</organismHost>
<organismHost>
    <name type="scientific">Potamochoerus larvatus</name>
    <name type="common">Bushpig</name>
    <dbReference type="NCBI Taxonomy" id="273792"/>
</organismHost>
<organismHost>
    <name type="scientific">Sus scrofa</name>
    <name type="common">Pig</name>
    <dbReference type="NCBI Taxonomy" id="9823"/>
</organismHost>
<accession>P0CA09</accession>
<proteinExistence type="inferred from homology"/>
<reference key="1">
    <citation type="submission" date="2003-03" db="EMBL/GenBank/DDBJ databases">
        <title>African swine fever virus genomes.</title>
        <authorList>
            <person name="Kutish G.F."/>
            <person name="Rock D.L."/>
        </authorList>
    </citation>
    <scope>NUCLEOTIDE SEQUENCE [LARGE SCALE GENOMIC DNA]</scope>
</reference>
<evidence type="ECO:0000305" key="1"/>
<organism>
    <name type="scientific">African swine fever virus (isolate Warthog/Namibia/Wart80/1980)</name>
    <name type="common">ASFV</name>
    <dbReference type="NCBI Taxonomy" id="561444"/>
    <lineage>
        <taxon>Viruses</taxon>
        <taxon>Varidnaviria</taxon>
        <taxon>Bamfordvirae</taxon>
        <taxon>Nucleocytoviricota</taxon>
        <taxon>Pokkesviricetes</taxon>
        <taxon>Asfuvirales</taxon>
        <taxon>Asfarviridae</taxon>
        <taxon>Asfivirus</taxon>
        <taxon>African swine fever virus</taxon>
    </lineage>
</organism>
<feature type="chain" id="PRO_0000373466" description="Putative helicase/primase complex protein">
    <location>
        <begin position="1"/>
        <end position="1051"/>
    </location>
</feature>
<dbReference type="EMBL" id="AY261366">
    <property type="status" value="NOT_ANNOTATED_CDS"/>
    <property type="molecule type" value="Genomic_DNA"/>
</dbReference>
<dbReference type="Proteomes" id="UP000000858">
    <property type="component" value="Segment"/>
</dbReference>
<dbReference type="GO" id="GO:0005524">
    <property type="term" value="F:ATP binding"/>
    <property type="evidence" value="ECO:0007669"/>
    <property type="project" value="InterPro"/>
</dbReference>
<dbReference type="GO" id="GO:0003688">
    <property type="term" value="F:DNA replication origin binding"/>
    <property type="evidence" value="ECO:0007669"/>
    <property type="project" value="InterPro"/>
</dbReference>
<dbReference type="GO" id="GO:0006260">
    <property type="term" value="P:DNA replication"/>
    <property type="evidence" value="ECO:0007669"/>
    <property type="project" value="UniProtKB-KW"/>
</dbReference>
<dbReference type="Gene3D" id="3.40.50.300">
    <property type="entry name" value="P-loop containing nucleotide triphosphate hydrolases"/>
    <property type="match status" value="1"/>
</dbReference>
<dbReference type="InterPro" id="IPR027417">
    <property type="entry name" value="P-loop_NTPase"/>
</dbReference>
<dbReference type="InterPro" id="IPR003450">
    <property type="entry name" value="Replication_origin-bd"/>
</dbReference>
<dbReference type="Pfam" id="PF02399">
    <property type="entry name" value="Herpes_ori_bp"/>
    <property type="match status" value="2"/>
</dbReference>
<dbReference type="Pfam" id="PF03121">
    <property type="entry name" value="Herpes_UL52"/>
    <property type="match status" value="1"/>
</dbReference>
<dbReference type="SUPFAM" id="SSF52540">
    <property type="entry name" value="P-loop containing nucleoside triphosphate hydrolases"/>
    <property type="match status" value="1"/>
</dbReference>
<gene>
    <name type="ordered locus">War-057</name>
</gene>
<protein>
    <recommendedName>
        <fullName>Putative helicase/primase complex protein</fullName>
        <shortName>pF1055L</shortName>
    </recommendedName>
</protein>
<keyword id="KW-0235">DNA replication</keyword>
<keyword id="KW-0244">Early protein</keyword>
<comment type="function">
    <text>May be involved in DNA replication.</text>
</comment>
<comment type="induction">
    <text evidence="1">Expressed in the early phase of the viral replicative cycle.</text>
</comment>
<comment type="similarity">
    <text evidence="1">Belongs to the asfivirus F1055L family.</text>
</comment>
<name>PRIM_ASFWA</name>